<evidence type="ECO:0000250" key="1"/>
<evidence type="ECO:0000250" key="2">
    <source>
        <dbReference type="UniProtKB" id="Q8L7W1"/>
    </source>
</evidence>
<evidence type="ECO:0000255" key="3"/>
<evidence type="ECO:0000256" key="4">
    <source>
        <dbReference type="SAM" id="MobiDB-lite"/>
    </source>
</evidence>
<evidence type="ECO:0000269" key="5">
    <source>
    </source>
</evidence>
<evidence type="ECO:0000269" key="6">
    <source>
    </source>
</evidence>
<evidence type="ECO:0000303" key="7">
    <source>
    </source>
</evidence>
<evidence type="ECO:0000305" key="8"/>
<comment type="function">
    <text evidence="1 5 6">Mechanosensitive channel that opens in response to stretch forces in the membrane lipid bilayer (By similarity). Controls plastid size, shape, and perhaps division during normal plant development by altering ion flux in response to changes in membrane tension. Acts as a component of the chloroplast division machinery.</text>
</comment>
<comment type="subcellular location">
    <subcellularLocation>
        <location evidence="5">Plastid</location>
        <location evidence="5">Chloroplast membrane</location>
        <topology evidence="5">Multi-pass membrane protein</topology>
    </subcellularLocation>
</comment>
<comment type="alternative products">
    <event type="alternative splicing"/>
    <isoform>
        <id>Q56X46-1</id>
        <name>1</name>
        <sequence type="displayed"/>
    </isoform>
    <isoform>
        <id>Q56X46-2</id>
        <name>2</name>
        <sequence type="described" ref="VSP_042196"/>
    </isoform>
    <isoform>
        <id>Q56X46-3</id>
        <name>3</name>
        <sequence type="described" ref="VSP_042195"/>
    </isoform>
</comment>
<comment type="tissue specificity">
    <text evidence="5">Widely expressed.</text>
</comment>
<comment type="disruption phenotype">
    <text evidence="5 6">Msl2 and msl3 double mutant shows abnormalities in the size and shape of plastids with enlarged chloroplasts containing multiple FtsZ rings.</text>
</comment>
<comment type="similarity">
    <text evidence="8">Belongs to the MscS (TC 1.A.23) family.</text>
</comment>
<comment type="sequence caution" evidence="8">
    <conflict type="erroneous gene model prediction">
        <sequence resource="EMBL-CDS" id="CAB89394"/>
    </conflict>
</comment>
<reference key="1">
    <citation type="journal article" date="2000" name="Nature">
        <title>Sequence and analysis of chromosome 5 of the plant Arabidopsis thaliana.</title>
        <authorList>
            <person name="Tabata S."/>
            <person name="Kaneko T."/>
            <person name="Nakamura Y."/>
            <person name="Kotani H."/>
            <person name="Kato T."/>
            <person name="Asamizu E."/>
            <person name="Miyajima N."/>
            <person name="Sasamoto S."/>
            <person name="Kimura T."/>
            <person name="Hosouchi T."/>
            <person name="Kawashima K."/>
            <person name="Kohara M."/>
            <person name="Matsumoto M."/>
            <person name="Matsuno A."/>
            <person name="Muraki A."/>
            <person name="Nakayama S."/>
            <person name="Nakazaki N."/>
            <person name="Naruo K."/>
            <person name="Okumura S."/>
            <person name="Shinpo S."/>
            <person name="Takeuchi C."/>
            <person name="Wada T."/>
            <person name="Watanabe A."/>
            <person name="Yamada M."/>
            <person name="Yasuda M."/>
            <person name="Sato S."/>
            <person name="de la Bastide M."/>
            <person name="Huang E."/>
            <person name="Spiegel L."/>
            <person name="Gnoj L."/>
            <person name="O'Shaughnessy A."/>
            <person name="Preston R."/>
            <person name="Habermann K."/>
            <person name="Murray J."/>
            <person name="Johnson D."/>
            <person name="Rohlfing T."/>
            <person name="Nelson J."/>
            <person name="Stoneking T."/>
            <person name="Pepin K."/>
            <person name="Spieth J."/>
            <person name="Sekhon M."/>
            <person name="Armstrong J."/>
            <person name="Becker M."/>
            <person name="Belter E."/>
            <person name="Cordum H."/>
            <person name="Cordes M."/>
            <person name="Courtney L."/>
            <person name="Courtney W."/>
            <person name="Dante M."/>
            <person name="Du H."/>
            <person name="Edwards J."/>
            <person name="Fryman J."/>
            <person name="Haakensen B."/>
            <person name="Lamar E."/>
            <person name="Latreille P."/>
            <person name="Leonard S."/>
            <person name="Meyer R."/>
            <person name="Mulvaney E."/>
            <person name="Ozersky P."/>
            <person name="Riley A."/>
            <person name="Strowmatt C."/>
            <person name="Wagner-McPherson C."/>
            <person name="Wollam A."/>
            <person name="Yoakum M."/>
            <person name="Bell M."/>
            <person name="Dedhia N."/>
            <person name="Parnell L."/>
            <person name="Shah R."/>
            <person name="Rodriguez M."/>
            <person name="Hoon See L."/>
            <person name="Vil D."/>
            <person name="Baker J."/>
            <person name="Kirchoff K."/>
            <person name="Toth K."/>
            <person name="King L."/>
            <person name="Bahret A."/>
            <person name="Miller B."/>
            <person name="Marra M.A."/>
            <person name="Martienssen R."/>
            <person name="McCombie W.R."/>
            <person name="Wilson R.K."/>
            <person name="Murphy G."/>
            <person name="Bancroft I."/>
            <person name="Volckaert G."/>
            <person name="Wambutt R."/>
            <person name="Duesterhoeft A."/>
            <person name="Stiekema W."/>
            <person name="Pohl T."/>
            <person name="Entian K.-D."/>
            <person name="Terryn N."/>
            <person name="Hartley N."/>
            <person name="Bent E."/>
            <person name="Johnson S."/>
            <person name="Langham S.-A."/>
            <person name="McCullagh B."/>
            <person name="Robben J."/>
            <person name="Grymonprez B."/>
            <person name="Zimmermann W."/>
            <person name="Ramsperger U."/>
            <person name="Wedler H."/>
            <person name="Balke K."/>
            <person name="Wedler E."/>
            <person name="Peters S."/>
            <person name="van Staveren M."/>
            <person name="Dirkse W."/>
            <person name="Mooijman P."/>
            <person name="Klein Lankhorst R."/>
            <person name="Weitzenegger T."/>
            <person name="Bothe G."/>
            <person name="Rose M."/>
            <person name="Hauf J."/>
            <person name="Berneiser S."/>
            <person name="Hempel S."/>
            <person name="Feldpausch M."/>
            <person name="Lamberth S."/>
            <person name="Villarroel R."/>
            <person name="Gielen J."/>
            <person name="Ardiles W."/>
            <person name="Bents O."/>
            <person name="Lemcke K."/>
            <person name="Kolesov G."/>
            <person name="Mayer K.F.X."/>
            <person name="Rudd S."/>
            <person name="Schoof H."/>
            <person name="Schueller C."/>
            <person name="Zaccaria P."/>
            <person name="Mewes H.-W."/>
            <person name="Bevan M."/>
            <person name="Fransz P.F."/>
        </authorList>
    </citation>
    <scope>NUCLEOTIDE SEQUENCE [LARGE SCALE GENOMIC DNA]</scope>
    <source>
        <strain>cv. Columbia</strain>
    </source>
</reference>
<reference key="2">
    <citation type="journal article" date="2017" name="Plant J.">
        <title>Araport11: a complete reannotation of the Arabidopsis thaliana reference genome.</title>
        <authorList>
            <person name="Cheng C.Y."/>
            <person name="Krishnakumar V."/>
            <person name="Chan A.P."/>
            <person name="Thibaud-Nissen F."/>
            <person name="Schobel S."/>
            <person name="Town C.D."/>
        </authorList>
    </citation>
    <scope>GENOME REANNOTATION</scope>
    <source>
        <strain>cv. Columbia</strain>
    </source>
</reference>
<reference key="3">
    <citation type="submission" date="2006-07" db="EMBL/GenBank/DDBJ databases">
        <title>Large-scale analysis of RIKEN Arabidopsis full-length (RAFL) cDNAs.</title>
        <authorList>
            <person name="Totoki Y."/>
            <person name="Seki M."/>
            <person name="Ishida J."/>
            <person name="Nakajima M."/>
            <person name="Enju A."/>
            <person name="Kamiya A."/>
            <person name="Narusaka M."/>
            <person name="Shin-i T."/>
            <person name="Nakagawa M."/>
            <person name="Sakamoto N."/>
            <person name="Oishi K."/>
            <person name="Kohara Y."/>
            <person name="Kobayashi M."/>
            <person name="Toyoda A."/>
            <person name="Sakaki Y."/>
            <person name="Sakurai T."/>
            <person name="Iida K."/>
            <person name="Akiyama K."/>
            <person name="Satou M."/>
            <person name="Toyoda T."/>
            <person name="Konagaya A."/>
            <person name="Carninci P."/>
            <person name="Kawai J."/>
            <person name="Hayashizaki Y."/>
            <person name="Shinozaki K."/>
        </authorList>
    </citation>
    <scope>NUCLEOTIDE SEQUENCE [LARGE SCALE MRNA] (ISOFORM 1)</scope>
    <source>
        <strain>cv. Columbia</strain>
    </source>
</reference>
<reference key="4">
    <citation type="journal article" date="2009" name="DNA Res.">
        <title>Analysis of multiple occurrences of alternative splicing events in Arabidopsis thaliana using novel sequenced full-length cDNAs.</title>
        <authorList>
            <person name="Iida K."/>
            <person name="Fukami-Kobayashi K."/>
            <person name="Toyoda A."/>
            <person name="Sakaki Y."/>
            <person name="Kobayashi M."/>
            <person name="Seki M."/>
            <person name="Shinozaki K."/>
        </authorList>
    </citation>
    <scope>NUCLEOTIDE SEQUENCE [LARGE SCALE MRNA] (ISOFORM 3)</scope>
    <source>
        <strain>cv. Columbia</strain>
        <tissue>Rosette leaf</tissue>
    </source>
</reference>
<reference key="5">
    <citation type="journal article" date="2003" name="Microbiol. Mol. Biol. Rev.">
        <title>Two families of mechanosensitive channel proteins.</title>
        <authorList>
            <person name="Pivetti C.D."/>
            <person name="Yen M.R."/>
            <person name="Miller S."/>
            <person name="Busch W."/>
            <person name="Tseng Y.H."/>
            <person name="Booth I.R."/>
            <person name="Saier M.H. Jr."/>
        </authorList>
    </citation>
    <scope>GENE FAMILY</scope>
</reference>
<reference key="6">
    <citation type="journal article" date="2006" name="Curr. Biol.">
        <title>MscS-like proteins control plastid size and shape in Arabidopsis thaliana.</title>
        <authorList>
            <person name="Haswell E.S."/>
            <person name="Meyerowitz E.M."/>
        </authorList>
    </citation>
    <scope>FUNCTION</scope>
    <scope>DISRUPTION PHENOTYPE</scope>
    <scope>SUBCELLULAR LOCATION</scope>
    <scope>TISSUE SPECIFICITY</scope>
</reference>
<reference key="7">
    <citation type="book" date="2007" name="Mechanosensitive Ion Channels, Part A">
        <title>MscS-like proteins in plants.</title>
        <editorList>
            <person name="Hamill O.P."/>
        </editorList>
        <authorList>
            <person name="Haswell E.S."/>
        </authorList>
    </citation>
    <scope>REVIEW</scope>
    <scope>GENE FAMILY</scope>
    <scope>NOMENCLATURE</scope>
</reference>
<reference key="8">
    <citation type="journal article" date="2011" name="Plant Cell">
        <title>Two mechanosensitive channel homologs influence division ring placement in Arabidopsis chloroplasts.</title>
        <authorList>
            <person name="Wilson M.E."/>
            <person name="Jensen G.S."/>
            <person name="Haswell E.S."/>
        </authorList>
    </citation>
    <scope>FUNCTION</scope>
    <scope>DISRUPTION PHENOTYPE</scope>
</reference>
<gene>
    <name type="primary">MSL2</name>
    <name type="ordered locus">At5g10490</name>
    <name type="ORF">F12B17.160</name>
</gene>
<name>MSL2_ARATH</name>
<keyword id="KW-0025">Alternative splicing</keyword>
<keyword id="KW-0150">Chloroplast</keyword>
<keyword id="KW-0407">Ion channel</keyword>
<keyword id="KW-0406">Ion transport</keyword>
<keyword id="KW-0472">Membrane</keyword>
<keyword id="KW-0597">Phosphoprotein</keyword>
<keyword id="KW-0934">Plastid</keyword>
<keyword id="KW-1185">Reference proteome</keyword>
<keyword id="KW-0809">Transit peptide</keyword>
<keyword id="KW-0812">Transmembrane</keyword>
<keyword id="KW-1133">Transmembrane helix</keyword>
<keyword id="KW-0813">Transport</keyword>
<feature type="transit peptide" description="Chloroplast" evidence="3">
    <location>
        <begin position="1"/>
        <end position="75"/>
    </location>
</feature>
<feature type="chain" id="PRO_0000415325" description="Mechanosensitive ion channel protein 2, chloroplastic">
    <location>
        <begin position="76"/>
        <end position="673"/>
    </location>
</feature>
<feature type="transmembrane region" description="Helical" evidence="3">
    <location>
        <begin position="107"/>
        <end position="127"/>
    </location>
</feature>
<feature type="transmembrane region" description="Helical" evidence="3">
    <location>
        <begin position="152"/>
        <end position="172"/>
    </location>
</feature>
<feature type="transmembrane region" description="Helical" evidence="3">
    <location>
        <begin position="193"/>
        <end position="213"/>
    </location>
</feature>
<feature type="transmembrane region" description="Helical" evidence="3">
    <location>
        <begin position="240"/>
        <end position="260"/>
    </location>
</feature>
<feature type="transmembrane region" description="Helical" evidence="3">
    <location>
        <begin position="264"/>
        <end position="284"/>
    </location>
</feature>
<feature type="region of interest" description="Disordered" evidence="4">
    <location>
        <begin position="492"/>
        <end position="673"/>
    </location>
</feature>
<feature type="compositionally biased region" description="Basic and acidic residues" evidence="4">
    <location>
        <begin position="510"/>
        <end position="525"/>
    </location>
</feature>
<feature type="compositionally biased region" description="Basic and acidic residues" evidence="4">
    <location>
        <begin position="564"/>
        <end position="576"/>
    </location>
</feature>
<feature type="compositionally biased region" description="Basic and acidic residues" evidence="4">
    <location>
        <begin position="617"/>
        <end position="642"/>
    </location>
</feature>
<feature type="compositionally biased region" description="Polar residues" evidence="4">
    <location>
        <begin position="661"/>
        <end position="673"/>
    </location>
</feature>
<feature type="modified residue" description="Phosphoserine" evidence="2">
    <location>
        <position position="571"/>
    </location>
</feature>
<feature type="splice variant" id="VSP_042195" description="In isoform 3." evidence="7">
    <location>
        <begin position="1"/>
        <end position="28"/>
    </location>
</feature>
<feature type="splice variant" id="VSP_042196" description="In isoform 2." evidence="8">
    <original>ALYGTLQ</original>
    <variation>RNFNF</variation>
    <location>
        <begin position="2"/>
        <end position="8"/>
    </location>
</feature>
<sequence length="673" mass="74429">MALYGTLQLSHSLGLCRNQRFCNPENSAMRRRLHISNGPLSLGVPLGQHGFSNILLSNYLRRPICSVPCRTTAFRCHSFSASGKAIEPAVKAVTVVLTKSHGLMQQFPFVYKLVPAVALLVFSLWGLVPFARQGRNILLNKNDNGWKKSGTYHVMTSYVQPLLLWLGALFICRALDPVVLPTEASKIVKDRLLNFVRSLSTVLAFAYCLSSLIQQTQKLFSETSNPSDTRNMGFQFAGKALYSAVWVAAVSLFMELLGFSTQKWLTAGGLGTVLITLAGREILTNFLSSVMIHATRPFVLNEWIQTKIEGYEVSGTVEHVGWWSPTIIRGEDREAIHIPNHKFTVNVVRNLTQKTHWRIKTHLAISHLDVNKINNIVADMRKVLAKNPMVEQQRLHRRVFLENVIPENQALSILISCFVKTSHHEEYLGVKEAILLDLLRVISHHRARLATPIRTIRKMYTETDVENTPFGESMYGGVTSRRPLMLIEPAYKINGEDKSKSQNRAAKPTAEQENKGSNPKSKETSSPDLKANVKVGESPVSDTNKVPEETVAKPVIKAVSKPPTPKDTETSGTEKPKAKRSGGTIKSTKTDETDSSTSSASRSTLEENIVLGVALEGSKRTLPIEEEIHSPPMETDAKELTGARRSGGNGPLVADKEQKDSQSQPNSGASTEP</sequence>
<protein>
    <recommendedName>
        <fullName>Mechanosensitive ion channel protein 2, chloroplastic</fullName>
    </recommendedName>
    <alternativeName>
        <fullName>Mechanosensitive channel of small conductance-like 2</fullName>
    </alternativeName>
    <alternativeName>
        <fullName>MscS-Like protein 2</fullName>
    </alternativeName>
</protein>
<organism>
    <name type="scientific">Arabidopsis thaliana</name>
    <name type="common">Mouse-ear cress</name>
    <dbReference type="NCBI Taxonomy" id="3702"/>
    <lineage>
        <taxon>Eukaryota</taxon>
        <taxon>Viridiplantae</taxon>
        <taxon>Streptophyta</taxon>
        <taxon>Embryophyta</taxon>
        <taxon>Tracheophyta</taxon>
        <taxon>Spermatophyta</taxon>
        <taxon>Magnoliopsida</taxon>
        <taxon>eudicotyledons</taxon>
        <taxon>Gunneridae</taxon>
        <taxon>Pentapetalae</taxon>
        <taxon>rosids</taxon>
        <taxon>malvids</taxon>
        <taxon>Brassicales</taxon>
        <taxon>Brassicaceae</taxon>
        <taxon>Camelineae</taxon>
        <taxon>Arabidopsis</taxon>
    </lineage>
</organism>
<accession>Q56X46</accession>
<accession>B9DHF7</accession>
<accession>F4KGW2</accession>
<accession>Q9LXA1</accession>
<proteinExistence type="evidence at transcript level"/>
<dbReference type="EMBL" id="AL353995">
    <property type="protein sequence ID" value="CAB89394.1"/>
    <property type="status" value="ALT_SEQ"/>
    <property type="molecule type" value="Genomic_DNA"/>
</dbReference>
<dbReference type="EMBL" id="CP002688">
    <property type="protein sequence ID" value="AED91551.1"/>
    <property type="molecule type" value="Genomic_DNA"/>
</dbReference>
<dbReference type="EMBL" id="CP002688">
    <property type="protein sequence ID" value="AED91552.1"/>
    <property type="molecule type" value="Genomic_DNA"/>
</dbReference>
<dbReference type="EMBL" id="CP002688">
    <property type="protein sequence ID" value="AED91553.1"/>
    <property type="molecule type" value="Genomic_DNA"/>
</dbReference>
<dbReference type="EMBL" id="AK221831">
    <property type="protein sequence ID" value="BAD94053.1"/>
    <property type="molecule type" value="mRNA"/>
</dbReference>
<dbReference type="EMBL" id="AK230015">
    <property type="protein sequence ID" value="BAF01838.1"/>
    <property type="molecule type" value="mRNA"/>
</dbReference>
<dbReference type="EMBL" id="AK317509">
    <property type="protein sequence ID" value="BAH20174.1"/>
    <property type="molecule type" value="mRNA"/>
</dbReference>
<dbReference type="PIR" id="T49990">
    <property type="entry name" value="T49990"/>
</dbReference>
<dbReference type="RefSeq" id="NP_001078567.1">
    <molecule id="Q56X46-3"/>
    <property type="nucleotide sequence ID" value="NM_001085098.2"/>
</dbReference>
<dbReference type="RefSeq" id="NP_001190278.1">
    <molecule id="Q56X46-2"/>
    <property type="nucleotide sequence ID" value="NM_001203349.1"/>
</dbReference>
<dbReference type="RefSeq" id="NP_568230.2">
    <molecule id="Q56X46-1"/>
    <property type="nucleotide sequence ID" value="NM_121087.3"/>
</dbReference>
<dbReference type="SMR" id="Q56X46"/>
<dbReference type="FunCoup" id="Q56X46">
    <property type="interactions" value="686"/>
</dbReference>
<dbReference type="STRING" id="3702.Q56X46"/>
<dbReference type="TCDB" id="1.A.23.4.4">
    <property type="family name" value="the small conductance mechanosensitive ion channel (mscs) family"/>
</dbReference>
<dbReference type="PaxDb" id="3702-AT5G10490.1"/>
<dbReference type="ProteomicsDB" id="250958">
    <molecule id="Q56X46-1"/>
</dbReference>
<dbReference type="EnsemblPlants" id="AT5G10490.1">
    <molecule id="Q56X46-1"/>
    <property type="protein sequence ID" value="AT5G10490.1"/>
    <property type="gene ID" value="AT5G10490"/>
</dbReference>
<dbReference type="EnsemblPlants" id="AT5G10490.2">
    <molecule id="Q56X46-3"/>
    <property type="protein sequence ID" value="AT5G10490.2"/>
    <property type="gene ID" value="AT5G10490"/>
</dbReference>
<dbReference type="EnsemblPlants" id="AT5G10490.3">
    <molecule id="Q56X46-2"/>
    <property type="protein sequence ID" value="AT5G10490.3"/>
    <property type="gene ID" value="AT5G10490"/>
</dbReference>
<dbReference type="GeneID" id="830913"/>
<dbReference type="Gramene" id="AT5G10490.1">
    <molecule id="Q56X46-1"/>
    <property type="protein sequence ID" value="AT5G10490.1"/>
    <property type="gene ID" value="AT5G10490"/>
</dbReference>
<dbReference type="Gramene" id="AT5G10490.2">
    <molecule id="Q56X46-3"/>
    <property type="protein sequence ID" value="AT5G10490.2"/>
    <property type="gene ID" value="AT5G10490"/>
</dbReference>
<dbReference type="Gramene" id="AT5G10490.3">
    <molecule id="Q56X46-2"/>
    <property type="protein sequence ID" value="AT5G10490.3"/>
    <property type="gene ID" value="AT5G10490"/>
</dbReference>
<dbReference type="KEGG" id="ath:AT5G10490"/>
<dbReference type="Araport" id="AT5G10490"/>
<dbReference type="TAIR" id="AT5G10490">
    <property type="gene designation" value="MSL2"/>
</dbReference>
<dbReference type="eggNOG" id="ENOG502QTPM">
    <property type="taxonomic scope" value="Eukaryota"/>
</dbReference>
<dbReference type="InParanoid" id="Q56X46"/>
<dbReference type="OMA" id="HVMTFYL"/>
<dbReference type="PhylomeDB" id="Q56X46"/>
<dbReference type="PRO" id="PR:Q56X46"/>
<dbReference type="Proteomes" id="UP000006548">
    <property type="component" value="Chromosome 5"/>
</dbReference>
<dbReference type="ExpressionAtlas" id="Q56X46">
    <property type="expression patterns" value="baseline and differential"/>
</dbReference>
<dbReference type="GO" id="GO:0009507">
    <property type="term" value="C:chloroplast"/>
    <property type="evidence" value="ECO:0007005"/>
    <property type="project" value="TAIR"/>
</dbReference>
<dbReference type="GO" id="GO:0031969">
    <property type="term" value="C:chloroplast membrane"/>
    <property type="evidence" value="ECO:0007669"/>
    <property type="project" value="UniProtKB-SubCell"/>
</dbReference>
<dbReference type="GO" id="GO:0009526">
    <property type="term" value="C:plastid envelope"/>
    <property type="evidence" value="ECO:0000314"/>
    <property type="project" value="TAIR"/>
</dbReference>
<dbReference type="GO" id="GO:0010020">
    <property type="term" value="P:chloroplast fission"/>
    <property type="evidence" value="ECO:0000316"/>
    <property type="project" value="TAIR"/>
</dbReference>
<dbReference type="GO" id="GO:0034220">
    <property type="term" value="P:monoatomic ion transmembrane transport"/>
    <property type="evidence" value="ECO:0007669"/>
    <property type="project" value="UniProtKB-KW"/>
</dbReference>
<dbReference type="FunFam" id="1.10.287.1260:FF:000008">
    <property type="entry name" value="Mechanosensitive ion channel protein 3, chloroplastic"/>
    <property type="match status" value="1"/>
</dbReference>
<dbReference type="Gene3D" id="1.10.287.1260">
    <property type="match status" value="1"/>
</dbReference>
<dbReference type="Gene3D" id="2.30.30.60">
    <property type="match status" value="1"/>
</dbReference>
<dbReference type="InterPro" id="IPR010920">
    <property type="entry name" value="LSM_dom_sf"/>
</dbReference>
<dbReference type="InterPro" id="IPR023408">
    <property type="entry name" value="MscS_beta-dom_sf"/>
</dbReference>
<dbReference type="InterPro" id="IPR006685">
    <property type="entry name" value="MscS_channel_2nd"/>
</dbReference>
<dbReference type="InterPro" id="IPR056876">
    <property type="entry name" value="Msl2-3_C"/>
</dbReference>
<dbReference type="InterPro" id="IPR045042">
    <property type="entry name" value="YnaI-like"/>
</dbReference>
<dbReference type="PANTHER" id="PTHR43634:SF16">
    <property type="entry name" value="MECHANOSENSITIVE ION CHANNEL PROTEIN 2, CHLOROPLASTIC"/>
    <property type="match status" value="1"/>
</dbReference>
<dbReference type="PANTHER" id="PTHR43634">
    <property type="entry name" value="OW CONDUCTANCE MECHANOSENSITIVE CHANNEL"/>
    <property type="match status" value="1"/>
</dbReference>
<dbReference type="Pfam" id="PF00924">
    <property type="entry name" value="MS_channel_2nd"/>
    <property type="match status" value="1"/>
</dbReference>
<dbReference type="Pfam" id="PF24956">
    <property type="entry name" value="Msl2-3_C"/>
    <property type="match status" value="1"/>
</dbReference>
<dbReference type="Pfam" id="PF25237">
    <property type="entry name" value="MSL2_3"/>
    <property type="match status" value="1"/>
</dbReference>
<dbReference type="SUPFAM" id="SSF50182">
    <property type="entry name" value="Sm-like ribonucleoproteins"/>
    <property type="match status" value="1"/>
</dbReference>